<protein>
    <recommendedName>
        <fullName evidence="1">Elongation factor G, mitochondrial</fullName>
        <shortName evidence="1">EF-Gmt</shortName>
    </recommendedName>
    <alternativeName>
        <fullName evidence="1">Elongation factor G 1, mitochondrial</fullName>
        <shortName evidence="1">mEF-G 1</shortName>
    </alternativeName>
    <alternativeName>
        <fullName evidence="1">Elongation factor G1</fullName>
    </alternativeName>
</protein>
<dbReference type="EMBL" id="AAYY01000004">
    <property type="protein sequence ID" value="EDP44112.1"/>
    <property type="molecule type" value="Genomic_DNA"/>
</dbReference>
<dbReference type="RefSeq" id="XP_001731326.1">
    <property type="nucleotide sequence ID" value="XM_001731274.1"/>
</dbReference>
<dbReference type="SMR" id="A8PXR7"/>
<dbReference type="FunCoup" id="A8PXR7">
    <property type="interactions" value="293"/>
</dbReference>
<dbReference type="STRING" id="425265.A8PXR7"/>
<dbReference type="GeneID" id="5855633"/>
<dbReference type="KEGG" id="mgl:MGL_1509"/>
<dbReference type="VEuPathDB" id="FungiDB:MGL_1509"/>
<dbReference type="InParanoid" id="A8PXR7"/>
<dbReference type="OMA" id="GQFAKVQ"/>
<dbReference type="OrthoDB" id="198619at2759"/>
<dbReference type="UniPathway" id="UPA00345"/>
<dbReference type="Proteomes" id="UP000008837">
    <property type="component" value="Unassembled WGS sequence"/>
</dbReference>
<dbReference type="GO" id="GO:0005739">
    <property type="term" value="C:mitochondrion"/>
    <property type="evidence" value="ECO:0007669"/>
    <property type="project" value="UniProtKB-SubCell"/>
</dbReference>
<dbReference type="GO" id="GO:0005525">
    <property type="term" value="F:GTP binding"/>
    <property type="evidence" value="ECO:0007669"/>
    <property type="project" value="UniProtKB-UniRule"/>
</dbReference>
<dbReference type="GO" id="GO:0003924">
    <property type="term" value="F:GTPase activity"/>
    <property type="evidence" value="ECO:0007669"/>
    <property type="project" value="UniProtKB-UniRule"/>
</dbReference>
<dbReference type="GO" id="GO:0003746">
    <property type="term" value="F:translation elongation factor activity"/>
    <property type="evidence" value="ECO:0007669"/>
    <property type="project" value="UniProtKB-UniRule"/>
</dbReference>
<dbReference type="GO" id="GO:0070125">
    <property type="term" value="P:mitochondrial translational elongation"/>
    <property type="evidence" value="ECO:0007669"/>
    <property type="project" value="UniProtKB-UniRule"/>
</dbReference>
<dbReference type="CDD" id="cd01886">
    <property type="entry name" value="EF-G"/>
    <property type="match status" value="1"/>
</dbReference>
<dbReference type="CDD" id="cd16262">
    <property type="entry name" value="EFG_III"/>
    <property type="match status" value="1"/>
</dbReference>
<dbReference type="CDD" id="cd01434">
    <property type="entry name" value="EFG_mtEFG1_IV"/>
    <property type="match status" value="1"/>
</dbReference>
<dbReference type="CDD" id="cd04091">
    <property type="entry name" value="mtEFG1_II_like"/>
    <property type="match status" value="1"/>
</dbReference>
<dbReference type="FunFam" id="3.30.230.10:FF:000003">
    <property type="entry name" value="Elongation factor G"/>
    <property type="match status" value="1"/>
</dbReference>
<dbReference type="FunFam" id="3.30.70.240:FF:000001">
    <property type="entry name" value="Elongation factor G"/>
    <property type="match status" value="1"/>
</dbReference>
<dbReference type="FunFam" id="3.30.70.870:FF:000001">
    <property type="entry name" value="Elongation factor G"/>
    <property type="match status" value="1"/>
</dbReference>
<dbReference type="FunFam" id="2.40.30.10:FF:000022">
    <property type="entry name" value="Elongation factor G, mitochondrial"/>
    <property type="match status" value="1"/>
</dbReference>
<dbReference type="FunFam" id="3.40.50.300:FF:000558">
    <property type="entry name" value="Elongation factor G, mitochondrial"/>
    <property type="match status" value="1"/>
</dbReference>
<dbReference type="Gene3D" id="3.30.230.10">
    <property type="match status" value="1"/>
</dbReference>
<dbReference type="Gene3D" id="3.30.70.240">
    <property type="match status" value="1"/>
</dbReference>
<dbReference type="Gene3D" id="3.30.70.870">
    <property type="entry name" value="Elongation Factor G (Translational Gtpase), domain 3"/>
    <property type="match status" value="1"/>
</dbReference>
<dbReference type="Gene3D" id="3.40.50.300">
    <property type="entry name" value="P-loop containing nucleotide triphosphate hydrolases"/>
    <property type="match status" value="1"/>
</dbReference>
<dbReference type="Gene3D" id="2.40.30.10">
    <property type="entry name" value="Translation factors"/>
    <property type="match status" value="1"/>
</dbReference>
<dbReference type="HAMAP" id="MF_00054_B">
    <property type="entry name" value="EF_G_EF_2_B"/>
    <property type="match status" value="1"/>
</dbReference>
<dbReference type="InterPro" id="IPR041095">
    <property type="entry name" value="EFG_II"/>
</dbReference>
<dbReference type="InterPro" id="IPR009022">
    <property type="entry name" value="EFG_III"/>
</dbReference>
<dbReference type="InterPro" id="IPR035647">
    <property type="entry name" value="EFG_III/V"/>
</dbReference>
<dbReference type="InterPro" id="IPR047872">
    <property type="entry name" value="EFG_IV"/>
</dbReference>
<dbReference type="InterPro" id="IPR000640">
    <property type="entry name" value="EFG_V-like"/>
</dbReference>
<dbReference type="InterPro" id="IPR004161">
    <property type="entry name" value="EFTu-like_2"/>
</dbReference>
<dbReference type="InterPro" id="IPR031157">
    <property type="entry name" value="G_TR_CS"/>
</dbReference>
<dbReference type="InterPro" id="IPR027417">
    <property type="entry name" value="P-loop_NTPase"/>
</dbReference>
<dbReference type="InterPro" id="IPR020568">
    <property type="entry name" value="Ribosomal_Su5_D2-typ_SF"/>
</dbReference>
<dbReference type="InterPro" id="IPR014721">
    <property type="entry name" value="Ribsml_uS5_D2-typ_fold_subgr"/>
</dbReference>
<dbReference type="InterPro" id="IPR005225">
    <property type="entry name" value="Small_GTP-bd"/>
</dbReference>
<dbReference type="InterPro" id="IPR000795">
    <property type="entry name" value="T_Tr_GTP-bd_dom"/>
</dbReference>
<dbReference type="InterPro" id="IPR009000">
    <property type="entry name" value="Transl_B-barrel_sf"/>
</dbReference>
<dbReference type="InterPro" id="IPR004540">
    <property type="entry name" value="Transl_elong_EFG/EF2"/>
</dbReference>
<dbReference type="InterPro" id="IPR005517">
    <property type="entry name" value="Transl_elong_EFG/EF2_IV"/>
</dbReference>
<dbReference type="NCBIfam" id="TIGR00484">
    <property type="entry name" value="EF-G"/>
    <property type="match status" value="1"/>
</dbReference>
<dbReference type="NCBIfam" id="TIGR00231">
    <property type="entry name" value="small_GTP"/>
    <property type="match status" value="1"/>
</dbReference>
<dbReference type="PANTHER" id="PTHR43636">
    <property type="entry name" value="ELONGATION FACTOR G, MITOCHONDRIAL"/>
    <property type="match status" value="1"/>
</dbReference>
<dbReference type="PANTHER" id="PTHR43636:SF2">
    <property type="entry name" value="ELONGATION FACTOR G, MITOCHONDRIAL"/>
    <property type="match status" value="1"/>
</dbReference>
<dbReference type="Pfam" id="PF00679">
    <property type="entry name" value="EFG_C"/>
    <property type="match status" value="1"/>
</dbReference>
<dbReference type="Pfam" id="PF14492">
    <property type="entry name" value="EFG_III"/>
    <property type="match status" value="1"/>
</dbReference>
<dbReference type="Pfam" id="PF03764">
    <property type="entry name" value="EFG_IV"/>
    <property type="match status" value="1"/>
</dbReference>
<dbReference type="Pfam" id="PF00009">
    <property type="entry name" value="GTP_EFTU"/>
    <property type="match status" value="1"/>
</dbReference>
<dbReference type="Pfam" id="PF03144">
    <property type="entry name" value="GTP_EFTU_D2"/>
    <property type="match status" value="1"/>
</dbReference>
<dbReference type="PRINTS" id="PR00315">
    <property type="entry name" value="ELONGATNFCT"/>
</dbReference>
<dbReference type="SMART" id="SM00838">
    <property type="entry name" value="EFG_C"/>
    <property type="match status" value="1"/>
</dbReference>
<dbReference type="SMART" id="SM00889">
    <property type="entry name" value="EFG_IV"/>
    <property type="match status" value="1"/>
</dbReference>
<dbReference type="SUPFAM" id="SSF54980">
    <property type="entry name" value="EF-G C-terminal domain-like"/>
    <property type="match status" value="2"/>
</dbReference>
<dbReference type="SUPFAM" id="SSF52540">
    <property type="entry name" value="P-loop containing nucleoside triphosphate hydrolases"/>
    <property type="match status" value="1"/>
</dbReference>
<dbReference type="SUPFAM" id="SSF54211">
    <property type="entry name" value="Ribosomal protein S5 domain 2-like"/>
    <property type="match status" value="1"/>
</dbReference>
<dbReference type="SUPFAM" id="SSF50447">
    <property type="entry name" value="Translation proteins"/>
    <property type="match status" value="1"/>
</dbReference>
<dbReference type="PROSITE" id="PS00301">
    <property type="entry name" value="G_TR_1"/>
    <property type="match status" value="1"/>
</dbReference>
<dbReference type="PROSITE" id="PS51722">
    <property type="entry name" value="G_TR_2"/>
    <property type="match status" value="1"/>
</dbReference>
<evidence type="ECO:0000255" key="1">
    <source>
        <dbReference type="HAMAP-Rule" id="MF_03061"/>
    </source>
</evidence>
<evidence type="ECO:0000305" key="2"/>
<reference key="1">
    <citation type="journal article" date="2007" name="Proc. Natl. Acad. Sci. U.S.A.">
        <title>Dandruff-associated Malassezia genomes reveal convergent and divergent virulence traits shared with plant and human fungal pathogens.</title>
        <authorList>
            <person name="Xu J."/>
            <person name="Saunders C.W."/>
            <person name="Hu P."/>
            <person name="Grant R.A."/>
            <person name="Boekhout T."/>
            <person name="Kuramae E.E."/>
            <person name="Kronstad J.W."/>
            <person name="DeAngelis Y.M."/>
            <person name="Reeder N.L."/>
            <person name="Johnstone K.R."/>
            <person name="Leland M."/>
            <person name="Fieno A.M."/>
            <person name="Begley W.M."/>
            <person name="Sun Y."/>
            <person name="Lacey M.P."/>
            <person name="Chaudhary T."/>
            <person name="Keough T."/>
            <person name="Chu L."/>
            <person name="Sears R."/>
            <person name="Yuan B."/>
            <person name="Dawson T.L. Jr."/>
        </authorList>
    </citation>
    <scope>NUCLEOTIDE SEQUENCE [LARGE SCALE GENOMIC DNA]</scope>
    <source>
        <strain>ATCC MYA-4612 / CBS 7966</strain>
    </source>
</reference>
<feature type="chain" id="PRO_0000385575" description="Elongation factor G, mitochondrial">
    <location>
        <begin position="1"/>
        <end position="777"/>
    </location>
</feature>
<feature type="domain" description="tr-type G">
    <location>
        <begin position="34"/>
        <end position="338"/>
    </location>
</feature>
<feature type="binding site" evidence="1">
    <location>
        <begin position="43"/>
        <end position="50"/>
    </location>
    <ligand>
        <name>GTP</name>
        <dbReference type="ChEBI" id="CHEBI:37565"/>
    </ligand>
</feature>
<feature type="binding site" evidence="1">
    <location>
        <begin position="136"/>
        <end position="140"/>
    </location>
    <ligand>
        <name>GTP</name>
        <dbReference type="ChEBI" id="CHEBI:37565"/>
    </ligand>
</feature>
<feature type="binding site" evidence="1">
    <location>
        <begin position="190"/>
        <end position="193"/>
    </location>
    <ligand>
        <name>GTP</name>
        <dbReference type="ChEBI" id="CHEBI:37565"/>
    </ligand>
</feature>
<comment type="function">
    <text evidence="1">Mitochondrial GTPase that catalyzes the GTP-dependent ribosomal translocation step during translation elongation. During this step, the ribosome changes from the pre-translocational (PRE) to the post-translocational (POST) state as the newly formed A-site-bound peptidyl-tRNA and P-site-bound deacylated tRNA move to the P and E sites, respectively. Catalyzes the coordinated movement of the two tRNA molecules, the mRNA and conformational changes in the ribosome.</text>
</comment>
<comment type="pathway">
    <text evidence="1">Protein biosynthesis; polypeptide chain elongation.</text>
</comment>
<comment type="subcellular location">
    <subcellularLocation>
        <location evidence="1">Mitochondrion</location>
    </subcellularLocation>
</comment>
<comment type="miscellaneous">
    <text evidence="1">This protein may be expected to contain an N-terminal transit peptide but none has been predicted.</text>
</comment>
<comment type="similarity">
    <text evidence="2">Belongs to the TRAFAC class translation factor GTPase superfamily. Classic translation factor GTPase family. EF-G/EF-2 subfamily.</text>
</comment>
<proteinExistence type="inferred from homology"/>
<keyword id="KW-0251">Elongation factor</keyword>
<keyword id="KW-0342">GTP-binding</keyword>
<keyword id="KW-0496">Mitochondrion</keyword>
<keyword id="KW-0547">Nucleotide-binding</keyword>
<keyword id="KW-0648">Protein biosynthesis</keyword>
<keyword id="KW-1185">Reference proteome</keyword>
<gene>
    <name evidence="1" type="primary">MEF1</name>
    <name type="ORF">MGL_1509</name>
</gene>
<name>EFGM_MALGO</name>
<sequence>MNRIASYLRTYATEAERPMATDVQPSESDVERLLRQRNVGISAHIDSGKTTLTERVLYYTGRIKDIHEVRGRDEVGAKMDSMELEREKGITIQSAATYCNWKATPPTERSNMTGDAADESTVTTQKKHDYHINIIDTPGHVDFTIEVERALRVLDGAVLVLCAVSGVQSQTMTVDRQMRRYSVPRLSFINKMDRAGANPWRVVEQIRTKLRMPAAAMQVPIGAEDNFQGLVDLVRWKAVYNEGTKGNVVRESDDIPADVLELAREKRQELIEQLSDVDDEMAEIFIEEREPTIEELVAALRRATVACRFSPVFLGTAIKNKGVQALLDGMCAYLPNPMEVRAIANDTAVAKKIAAQANEEGHDVAAMQSSAQHGSEVQLVPATEAPLVGLAFKLEESRFGQLTYMRVYQGILRRGGIIFNSRTGKKVKVPRLVRMHADDMEDVQEIGPGEICAMFGVECSSGDTFTDGSTTLSMSAMFVPEPVISLSLTPEGKDTSVNFSRALNRFQKEDPTFRVHVDSESSETIISGMGELHLDIYVERMRREYNVPCTTGKPRVAFRETISQPAKFNYTHKKQTGGAGQFGRVIGYIEPMTVDEDTGKDTAFVNSVMGGNIPPSYIPACEKGFADGLEKGALAGYPVCGVRMVLEDGAAHSVDSSELAFRIAAHAAFREAFRAANPTILEPKMSVEVIAPVEFQGTVIGALNQRKGTIEDTEVREDDFTITAEVSLNDMFGFSSQLRGLTQGKGEFSMEYKKHEPVMPNVQADMEAAYKKSLEKK</sequence>
<accession>A8PXR7</accession>
<organism>
    <name type="scientific">Malassezia globosa (strain ATCC MYA-4612 / CBS 7966)</name>
    <name type="common">Dandruff-associated fungus</name>
    <dbReference type="NCBI Taxonomy" id="425265"/>
    <lineage>
        <taxon>Eukaryota</taxon>
        <taxon>Fungi</taxon>
        <taxon>Dikarya</taxon>
        <taxon>Basidiomycota</taxon>
        <taxon>Ustilaginomycotina</taxon>
        <taxon>Malasseziomycetes</taxon>
        <taxon>Malasseziales</taxon>
        <taxon>Malasseziaceae</taxon>
        <taxon>Malassezia</taxon>
    </lineage>
</organism>